<dbReference type="EMBL" id="U56696">
    <property type="protein sequence ID" value="AAC49808.1"/>
    <property type="molecule type" value="mRNA"/>
</dbReference>
<dbReference type="EMBL" id="AACD01000029">
    <property type="protein sequence ID" value="EAA65009.1"/>
    <property type="molecule type" value="Genomic_DNA"/>
</dbReference>
<dbReference type="EMBL" id="BN001307">
    <property type="protein sequence ID" value="CBF85673.1"/>
    <property type="molecule type" value="Genomic_DNA"/>
</dbReference>
<dbReference type="RefSeq" id="XP_659448.1">
    <property type="nucleotide sequence ID" value="XM_654356.1"/>
</dbReference>
<dbReference type="FunCoup" id="P78612">
    <property type="interactions" value="23"/>
</dbReference>
<dbReference type="STRING" id="227321.P78612"/>
<dbReference type="EnsemblFungi" id="CBF85673">
    <property type="protein sequence ID" value="CBF85673"/>
    <property type="gene ID" value="ANIA_01844"/>
</dbReference>
<dbReference type="KEGG" id="ani:ANIA_01844"/>
<dbReference type="VEuPathDB" id="FungiDB:AN1844"/>
<dbReference type="eggNOG" id="ENOG502QTQN">
    <property type="taxonomic scope" value="Eukaryota"/>
</dbReference>
<dbReference type="HOGENOM" id="CLU_006001_0_0_1"/>
<dbReference type="InParanoid" id="P78612"/>
<dbReference type="OMA" id="CLHGYAK"/>
<dbReference type="OrthoDB" id="7785529at2759"/>
<dbReference type="Proteomes" id="UP000000560">
    <property type="component" value="Chromosome VII"/>
</dbReference>
<dbReference type="GO" id="GO:0005737">
    <property type="term" value="C:cytoplasm"/>
    <property type="evidence" value="ECO:0000318"/>
    <property type="project" value="GO_Central"/>
</dbReference>
<dbReference type="GO" id="GO:0005829">
    <property type="term" value="C:cytosol"/>
    <property type="evidence" value="ECO:0000318"/>
    <property type="project" value="GO_Central"/>
</dbReference>
<dbReference type="GO" id="GO:0005886">
    <property type="term" value="C:plasma membrane"/>
    <property type="evidence" value="ECO:0000318"/>
    <property type="project" value="GO_Central"/>
</dbReference>
<dbReference type="GO" id="GO:0030674">
    <property type="term" value="F:protein-macromolecule adaptor activity"/>
    <property type="evidence" value="ECO:0000318"/>
    <property type="project" value="GO_Central"/>
</dbReference>
<dbReference type="GO" id="GO:0031625">
    <property type="term" value="F:ubiquitin protein ligase binding"/>
    <property type="evidence" value="ECO:0000318"/>
    <property type="project" value="GO_Central"/>
</dbReference>
<dbReference type="GO" id="GO:0071467">
    <property type="term" value="P:cellular response to pH"/>
    <property type="evidence" value="ECO:0000315"/>
    <property type="project" value="AspGD"/>
</dbReference>
<dbReference type="GO" id="GO:0042318">
    <property type="term" value="P:penicillin biosynthetic process"/>
    <property type="evidence" value="ECO:0000315"/>
    <property type="project" value="AspGD"/>
</dbReference>
<dbReference type="GO" id="GO:1900198">
    <property type="term" value="P:positive regulation of penicillin biosynthetic process"/>
    <property type="evidence" value="ECO:0000315"/>
    <property type="project" value="AspGD"/>
</dbReference>
<dbReference type="GO" id="GO:1900376">
    <property type="term" value="P:regulation of secondary metabolite biosynthetic process"/>
    <property type="evidence" value="ECO:0000315"/>
    <property type="project" value="AspGD"/>
</dbReference>
<dbReference type="GO" id="GO:0070086">
    <property type="term" value="P:ubiquitin-dependent endocytosis"/>
    <property type="evidence" value="ECO:0000318"/>
    <property type="project" value="GO_Central"/>
</dbReference>
<dbReference type="Gene3D" id="2.60.40.640">
    <property type="match status" value="2"/>
</dbReference>
<dbReference type="InterPro" id="IPR014752">
    <property type="entry name" value="Arrestin-like_C"/>
</dbReference>
<dbReference type="InterPro" id="IPR011021">
    <property type="entry name" value="Arrestin-like_N"/>
</dbReference>
<dbReference type="InterPro" id="IPR011022">
    <property type="entry name" value="Arrestin_C-like"/>
</dbReference>
<dbReference type="InterPro" id="IPR050357">
    <property type="entry name" value="Arrestin_domain-protein"/>
</dbReference>
<dbReference type="InterPro" id="IPR014756">
    <property type="entry name" value="Ig_E-set"/>
</dbReference>
<dbReference type="PANTHER" id="PTHR11188">
    <property type="entry name" value="ARRESTIN DOMAIN CONTAINING PROTEIN"/>
    <property type="match status" value="1"/>
</dbReference>
<dbReference type="PANTHER" id="PTHR11188:SF161">
    <property type="entry name" value="PH-RESPONSE REGULATOR PROTEIN PALF_RIM8"/>
    <property type="match status" value="1"/>
</dbReference>
<dbReference type="Pfam" id="PF02752">
    <property type="entry name" value="Arrestin_C"/>
    <property type="match status" value="1"/>
</dbReference>
<dbReference type="Pfam" id="PF00339">
    <property type="entry name" value="Arrestin_N"/>
    <property type="match status" value="1"/>
</dbReference>
<dbReference type="SMART" id="SM01017">
    <property type="entry name" value="Arrestin_C"/>
    <property type="match status" value="1"/>
</dbReference>
<dbReference type="SUPFAM" id="SSF81296">
    <property type="entry name" value="E set domains"/>
    <property type="match status" value="1"/>
</dbReference>
<feature type="chain" id="PRO_0000058189" description="pH-response regulator protein palF/RIM8">
    <location>
        <begin position="1"/>
        <end position="775"/>
    </location>
</feature>
<feature type="region of interest" description="Disordered" evidence="1">
    <location>
        <begin position="217"/>
        <end position="304"/>
    </location>
</feature>
<feature type="region of interest" description="Disordered" evidence="1">
    <location>
        <begin position="531"/>
        <end position="550"/>
    </location>
</feature>
<feature type="region of interest" description="Disordered" evidence="1">
    <location>
        <begin position="586"/>
        <end position="623"/>
    </location>
</feature>
<feature type="region of interest" description="Disordered" evidence="1">
    <location>
        <begin position="631"/>
        <end position="650"/>
    </location>
</feature>
<feature type="region of interest" description="Disordered" evidence="1">
    <location>
        <begin position="697"/>
        <end position="775"/>
    </location>
</feature>
<feature type="compositionally biased region" description="Low complexity" evidence="1">
    <location>
        <begin position="262"/>
        <end position="278"/>
    </location>
</feature>
<feature type="compositionally biased region" description="Polar residues" evidence="1">
    <location>
        <begin position="279"/>
        <end position="304"/>
    </location>
</feature>
<feature type="compositionally biased region" description="Polar residues" evidence="1">
    <location>
        <begin position="697"/>
        <end position="709"/>
    </location>
</feature>
<feature type="compositionally biased region" description="Basic and acidic residues" evidence="1">
    <location>
        <begin position="710"/>
        <end position="723"/>
    </location>
</feature>
<feature type="compositionally biased region" description="Basic and acidic residues" evidence="1">
    <location>
        <begin position="733"/>
        <end position="743"/>
    </location>
</feature>
<sequence length="775" mass="84087">MVRATCSCVMSVNPLSAQTSASPLSRNRSSLLSKFRTQLGQRNRAITDFYIEPDDPWRSYFPGDVIKGTVSLTVVRPVRITHLVISLHGIVKVFKNNVPAGETPPDVGSLGPGRGRRGAEYLGNGVATLFEDEVVLCGEGRLKEGIYKFRFEMSFPPYPLPSSISFERGTISYMLTSTLTKPTTMNPTLSCRRRINLLENIDIAAFPAPKPRVVTLEPISKRSKPKGKTKAAGFDAPDTASLEPSASGGITVPEHRPPLSPAPSNVSSSSRLSNSSQSFQIVTDPGSTASSGVRNSEARSNTPSVTDGIITAKAEVLRAGVLPGDTLPIKITINHTKQVRSAHGIIITLYRSGRIDLHPAIPMGSTANGKKPIYEDYYPRSRTGLGGLTLGTSRASSVFRKDLSQTFAPLIVDPTTLTADIKTSIRIPEDAFPTITRTPGSMINFRYYVEVVVDLRGKLTSPERFLPRFNLVSSGRNFSSNGKIVHPADTNGSAITANWGDNILDTDQIRREKGVVAVIFEVVIGTQDTQRRKSEARRMSSTAEEAEFQQPVENSVDGDYAGHDYQGSMAGPEPGYAPLENTAYGPDQIRWPDYPEQSEHEHYPFQPGTLPSPQPDEPMDEKARLRRAEQTLLPSQPPCDPEAGPSSAVEAAMPTAPVLPEDDHLNDYHHLPSTTVNGMTGMAPALMSAESVQTVIAGSSSAPLTSPSRPSEEDKQELERQRLMMEASAPGDPDARHNDRADDGPSAPIFHDDDDDQQLVGGAANGDELLPRYQR</sequence>
<comment type="function">
    <text evidence="2">Required for the proteolytic cleavage of the transcription factor pacC in response to alkaline ambient pH.</text>
</comment>
<comment type="similarity">
    <text evidence="3">Belongs to the arrestin family. PalF/RIM8 subfamily.</text>
</comment>
<evidence type="ECO:0000256" key="1">
    <source>
        <dbReference type="SAM" id="MobiDB-lite"/>
    </source>
</evidence>
<evidence type="ECO:0000269" key="2">
    <source>
    </source>
</evidence>
<evidence type="ECO:0000305" key="3"/>
<organism>
    <name type="scientific">Emericella nidulans (strain FGSC A4 / ATCC 38163 / CBS 112.46 / NRRL 194 / M139)</name>
    <name type="common">Aspergillus nidulans</name>
    <dbReference type="NCBI Taxonomy" id="227321"/>
    <lineage>
        <taxon>Eukaryota</taxon>
        <taxon>Fungi</taxon>
        <taxon>Dikarya</taxon>
        <taxon>Ascomycota</taxon>
        <taxon>Pezizomycotina</taxon>
        <taxon>Eurotiomycetes</taxon>
        <taxon>Eurotiomycetidae</taxon>
        <taxon>Eurotiales</taxon>
        <taxon>Aspergillaceae</taxon>
        <taxon>Aspergillus</taxon>
        <taxon>Aspergillus subgen. Nidulantes</taxon>
    </lineage>
</organism>
<accession>P78612</accession>
<accession>C8VPQ7</accession>
<accession>Q5BC86</accession>
<protein>
    <recommendedName>
        <fullName>pH-response regulator protein palF/RIM8</fullName>
    </recommendedName>
</protein>
<gene>
    <name type="primary">palF</name>
    <name type="ORF">AN1844</name>
</gene>
<proteinExistence type="evidence at transcript level"/>
<name>PALF_EMENI</name>
<keyword id="KW-1185">Reference proteome</keyword>
<reference key="1">
    <citation type="journal article" date="1997" name="Gene">
        <title>The sequence of palF, an environmental pH response gene in Aspergillus nidulans.</title>
        <authorList>
            <person name="Maccheroni W. Jr."/>
            <person name="May G.S."/>
            <person name="Martinez-Rossi N.M."/>
            <person name="Rossi A."/>
        </authorList>
    </citation>
    <scope>NUCLEOTIDE SEQUENCE [MRNA]</scope>
    <source>
        <strain>FGSC A4 / ATCC 38163 / CBS 112.46 / NRRL 194 / M139</strain>
    </source>
</reference>
<reference key="2">
    <citation type="journal article" date="2005" name="Nature">
        <title>Sequencing of Aspergillus nidulans and comparative analysis with A. fumigatus and A. oryzae.</title>
        <authorList>
            <person name="Galagan J.E."/>
            <person name="Calvo S.E."/>
            <person name="Cuomo C."/>
            <person name="Ma L.-J."/>
            <person name="Wortman J.R."/>
            <person name="Batzoglou S."/>
            <person name="Lee S.-I."/>
            <person name="Bastuerkmen M."/>
            <person name="Spevak C.C."/>
            <person name="Clutterbuck J."/>
            <person name="Kapitonov V."/>
            <person name="Jurka J."/>
            <person name="Scazzocchio C."/>
            <person name="Farman M.L."/>
            <person name="Butler J."/>
            <person name="Purcell S."/>
            <person name="Harris S."/>
            <person name="Braus G.H."/>
            <person name="Draht O."/>
            <person name="Busch S."/>
            <person name="D'Enfert C."/>
            <person name="Bouchier C."/>
            <person name="Goldman G.H."/>
            <person name="Bell-Pedersen D."/>
            <person name="Griffiths-Jones S."/>
            <person name="Doonan J.H."/>
            <person name="Yu J."/>
            <person name="Vienken K."/>
            <person name="Pain A."/>
            <person name="Freitag M."/>
            <person name="Selker E.U."/>
            <person name="Archer D.B."/>
            <person name="Penalva M.A."/>
            <person name="Oakley B.R."/>
            <person name="Momany M."/>
            <person name="Tanaka T."/>
            <person name="Kumagai T."/>
            <person name="Asai K."/>
            <person name="Machida M."/>
            <person name="Nierman W.C."/>
            <person name="Denning D.W."/>
            <person name="Caddick M.X."/>
            <person name="Hynes M."/>
            <person name="Paoletti M."/>
            <person name="Fischer R."/>
            <person name="Miller B.L."/>
            <person name="Dyer P.S."/>
            <person name="Sachs M.S."/>
            <person name="Osmani S.A."/>
            <person name="Birren B.W."/>
        </authorList>
    </citation>
    <scope>NUCLEOTIDE SEQUENCE [LARGE SCALE GENOMIC DNA]</scope>
    <source>
        <strain>FGSC A4 / ATCC 38163 / CBS 112.46 / NRRL 194 / M139</strain>
    </source>
</reference>
<reference key="3">
    <citation type="journal article" date="2009" name="Fungal Genet. Biol.">
        <title>The 2008 update of the Aspergillus nidulans genome annotation: a community effort.</title>
        <authorList>
            <person name="Wortman J.R."/>
            <person name="Gilsenan J.M."/>
            <person name="Joardar V."/>
            <person name="Deegan J."/>
            <person name="Clutterbuck J."/>
            <person name="Andersen M.R."/>
            <person name="Archer D."/>
            <person name="Bencina M."/>
            <person name="Braus G."/>
            <person name="Coutinho P."/>
            <person name="von Dohren H."/>
            <person name="Doonan J."/>
            <person name="Driessen A.J."/>
            <person name="Durek P."/>
            <person name="Espeso E."/>
            <person name="Fekete E."/>
            <person name="Flipphi M."/>
            <person name="Estrada C.G."/>
            <person name="Geysens S."/>
            <person name="Goldman G."/>
            <person name="de Groot P.W."/>
            <person name="Hansen K."/>
            <person name="Harris S.D."/>
            <person name="Heinekamp T."/>
            <person name="Helmstaedt K."/>
            <person name="Henrissat B."/>
            <person name="Hofmann G."/>
            <person name="Homan T."/>
            <person name="Horio T."/>
            <person name="Horiuchi H."/>
            <person name="James S."/>
            <person name="Jones M."/>
            <person name="Karaffa L."/>
            <person name="Karanyi Z."/>
            <person name="Kato M."/>
            <person name="Keller N."/>
            <person name="Kelly D.E."/>
            <person name="Kiel J.A."/>
            <person name="Kim J.M."/>
            <person name="van der Klei I.J."/>
            <person name="Klis F.M."/>
            <person name="Kovalchuk A."/>
            <person name="Krasevec N."/>
            <person name="Kubicek C.P."/>
            <person name="Liu B."/>
            <person name="Maccabe A."/>
            <person name="Meyer V."/>
            <person name="Mirabito P."/>
            <person name="Miskei M."/>
            <person name="Mos M."/>
            <person name="Mullins J."/>
            <person name="Nelson D.R."/>
            <person name="Nielsen J."/>
            <person name="Oakley B.R."/>
            <person name="Osmani S.A."/>
            <person name="Pakula T."/>
            <person name="Paszewski A."/>
            <person name="Paulsen I."/>
            <person name="Pilsyk S."/>
            <person name="Pocsi I."/>
            <person name="Punt P.J."/>
            <person name="Ram A.F."/>
            <person name="Ren Q."/>
            <person name="Robellet X."/>
            <person name="Robson G."/>
            <person name="Seiboth B."/>
            <person name="van Solingen P."/>
            <person name="Specht T."/>
            <person name="Sun J."/>
            <person name="Taheri-Talesh N."/>
            <person name="Takeshita N."/>
            <person name="Ussery D."/>
            <person name="vanKuyk P.A."/>
            <person name="Visser H."/>
            <person name="van de Vondervoort P.J."/>
            <person name="de Vries R.P."/>
            <person name="Walton J."/>
            <person name="Xiang X."/>
            <person name="Xiong Y."/>
            <person name="Zeng A.P."/>
            <person name="Brandt B.W."/>
            <person name="Cornell M.J."/>
            <person name="van den Hondel C.A."/>
            <person name="Visser J."/>
            <person name="Oliver S.G."/>
            <person name="Turner G."/>
        </authorList>
    </citation>
    <scope>GENOME REANNOTATION</scope>
    <source>
        <strain>FGSC A4 / ATCC 38163 / CBS 112.46 / NRRL 194 / M139</strain>
    </source>
</reference>
<reference key="4">
    <citation type="journal article" date="1986" name="Mol. Gen. Genet.">
        <title>Regulation of gene expression by pH of the growth medium in Aspergillus nidulans.</title>
        <authorList>
            <person name="Caddick M.X."/>
            <person name="Brownlee A.G."/>
            <person name="Arst H.N. Jr."/>
        </authorList>
    </citation>
    <scope>FUNCTION</scope>
</reference>